<reference key="1">
    <citation type="journal article" date="2003" name="Proc. Natl. Acad. Sci. U.S.A.">
        <title>Complete genome sequence of the marine planctomycete Pirellula sp. strain 1.</title>
        <authorList>
            <person name="Gloeckner F.O."/>
            <person name="Kube M."/>
            <person name="Bauer M."/>
            <person name="Teeling H."/>
            <person name="Lombardot T."/>
            <person name="Ludwig W."/>
            <person name="Gade D."/>
            <person name="Beck A."/>
            <person name="Borzym K."/>
            <person name="Heitmann K."/>
            <person name="Rabus R."/>
            <person name="Schlesner H."/>
            <person name="Amann R."/>
            <person name="Reinhardt R."/>
        </authorList>
    </citation>
    <scope>NUCLEOTIDE SEQUENCE [LARGE SCALE GENOMIC DNA]</scope>
    <source>
        <strain>DSM 10527 / NCIMB 13988 / SH1</strain>
    </source>
</reference>
<keyword id="KW-0030">Aminoacyl-tRNA synthetase</keyword>
<keyword id="KW-0067">ATP-binding</keyword>
<keyword id="KW-0175">Coiled coil</keyword>
<keyword id="KW-0963">Cytoplasm</keyword>
<keyword id="KW-0436">Ligase</keyword>
<keyword id="KW-0547">Nucleotide-binding</keyword>
<keyword id="KW-0648">Protein biosynthesis</keyword>
<keyword id="KW-1185">Reference proteome</keyword>
<organism>
    <name type="scientific">Rhodopirellula baltica (strain DSM 10527 / NCIMB 13988 / SH1)</name>
    <dbReference type="NCBI Taxonomy" id="243090"/>
    <lineage>
        <taxon>Bacteria</taxon>
        <taxon>Pseudomonadati</taxon>
        <taxon>Planctomycetota</taxon>
        <taxon>Planctomycetia</taxon>
        <taxon>Pirellulales</taxon>
        <taxon>Pirellulaceae</taxon>
        <taxon>Rhodopirellula</taxon>
    </lineage>
</organism>
<gene>
    <name evidence="1" type="primary">valS</name>
    <name type="ordered locus">RB1319</name>
</gene>
<name>SYV_RHOBA</name>
<proteinExistence type="inferred from homology"/>
<dbReference type="EC" id="6.1.1.9" evidence="1"/>
<dbReference type="EMBL" id="BX294135">
    <property type="protein sequence ID" value="CAD72027.1"/>
    <property type="status" value="ALT_INIT"/>
    <property type="molecule type" value="Genomic_DNA"/>
</dbReference>
<dbReference type="RefSeq" id="NP_864348.1">
    <property type="nucleotide sequence ID" value="NC_005027.1"/>
</dbReference>
<dbReference type="RefSeq" id="WP_193427762.1">
    <property type="nucleotide sequence ID" value="NC_005027.1"/>
</dbReference>
<dbReference type="SMR" id="Q7UXH9"/>
<dbReference type="FunCoup" id="Q7UXH9">
    <property type="interactions" value="513"/>
</dbReference>
<dbReference type="STRING" id="243090.RB1319"/>
<dbReference type="EnsemblBacteria" id="CAD72027">
    <property type="protein sequence ID" value="CAD72027"/>
    <property type="gene ID" value="RB1319"/>
</dbReference>
<dbReference type="KEGG" id="rba:RB1319"/>
<dbReference type="PATRIC" id="fig|243090.15.peg.605"/>
<dbReference type="eggNOG" id="COG0525">
    <property type="taxonomic scope" value="Bacteria"/>
</dbReference>
<dbReference type="HOGENOM" id="CLU_001493_0_2_0"/>
<dbReference type="InParanoid" id="Q7UXH9"/>
<dbReference type="OrthoDB" id="9810365at2"/>
<dbReference type="Proteomes" id="UP000001025">
    <property type="component" value="Chromosome"/>
</dbReference>
<dbReference type="GO" id="GO:0005829">
    <property type="term" value="C:cytosol"/>
    <property type="evidence" value="ECO:0000318"/>
    <property type="project" value="GO_Central"/>
</dbReference>
<dbReference type="GO" id="GO:0002161">
    <property type="term" value="F:aminoacyl-tRNA deacylase activity"/>
    <property type="evidence" value="ECO:0007669"/>
    <property type="project" value="InterPro"/>
</dbReference>
<dbReference type="GO" id="GO:0005524">
    <property type="term" value="F:ATP binding"/>
    <property type="evidence" value="ECO:0007669"/>
    <property type="project" value="UniProtKB-UniRule"/>
</dbReference>
<dbReference type="GO" id="GO:0004832">
    <property type="term" value="F:valine-tRNA ligase activity"/>
    <property type="evidence" value="ECO:0000318"/>
    <property type="project" value="GO_Central"/>
</dbReference>
<dbReference type="GO" id="GO:0006438">
    <property type="term" value="P:valyl-tRNA aminoacylation"/>
    <property type="evidence" value="ECO:0000318"/>
    <property type="project" value="GO_Central"/>
</dbReference>
<dbReference type="CDD" id="cd07962">
    <property type="entry name" value="Anticodon_Ia_Val"/>
    <property type="match status" value="1"/>
</dbReference>
<dbReference type="CDD" id="cd00817">
    <property type="entry name" value="ValRS_core"/>
    <property type="match status" value="1"/>
</dbReference>
<dbReference type="FunFam" id="1.10.287.380:FF:000001">
    <property type="entry name" value="Valine--tRNA ligase"/>
    <property type="match status" value="1"/>
</dbReference>
<dbReference type="FunFam" id="1.10.730.10:FF:000102">
    <property type="entry name" value="Valine--tRNA ligase"/>
    <property type="match status" value="1"/>
</dbReference>
<dbReference type="FunFam" id="3.40.50.620:FF:000032">
    <property type="entry name" value="Valine--tRNA ligase"/>
    <property type="match status" value="1"/>
</dbReference>
<dbReference type="Gene3D" id="3.40.50.620">
    <property type="entry name" value="HUPs"/>
    <property type="match status" value="2"/>
</dbReference>
<dbReference type="Gene3D" id="1.10.730.10">
    <property type="entry name" value="Isoleucyl-tRNA Synthetase, Domain 1"/>
    <property type="match status" value="1"/>
</dbReference>
<dbReference type="Gene3D" id="1.10.287.380">
    <property type="entry name" value="Valyl-tRNA synthetase, C-terminal domain"/>
    <property type="match status" value="1"/>
</dbReference>
<dbReference type="Gene3D" id="3.90.740.10">
    <property type="entry name" value="Valyl/Leucyl/Isoleucyl-tRNA synthetase, editing domain"/>
    <property type="match status" value="1"/>
</dbReference>
<dbReference type="HAMAP" id="MF_02004">
    <property type="entry name" value="Val_tRNA_synth_type1"/>
    <property type="match status" value="1"/>
</dbReference>
<dbReference type="InterPro" id="IPR001412">
    <property type="entry name" value="aa-tRNA-synth_I_CS"/>
</dbReference>
<dbReference type="InterPro" id="IPR002300">
    <property type="entry name" value="aa-tRNA-synth_Ia"/>
</dbReference>
<dbReference type="InterPro" id="IPR033705">
    <property type="entry name" value="Anticodon_Ia_Val"/>
</dbReference>
<dbReference type="InterPro" id="IPR013155">
    <property type="entry name" value="M/V/L/I-tRNA-synth_anticd-bd"/>
</dbReference>
<dbReference type="InterPro" id="IPR014729">
    <property type="entry name" value="Rossmann-like_a/b/a_fold"/>
</dbReference>
<dbReference type="InterPro" id="IPR010978">
    <property type="entry name" value="tRNA-bd_arm"/>
</dbReference>
<dbReference type="InterPro" id="IPR009080">
    <property type="entry name" value="tRNAsynth_Ia_anticodon-bd"/>
</dbReference>
<dbReference type="InterPro" id="IPR037118">
    <property type="entry name" value="Val-tRNA_synth_C_sf"/>
</dbReference>
<dbReference type="InterPro" id="IPR019499">
    <property type="entry name" value="Val-tRNA_synth_tRNA-bd"/>
</dbReference>
<dbReference type="InterPro" id="IPR009008">
    <property type="entry name" value="Val/Leu/Ile-tRNA-synth_edit"/>
</dbReference>
<dbReference type="InterPro" id="IPR002303">
    <property type="entry name" value="Valyl-tRNA_ligase"/>
</dbReference>
<dbReference type="PANTHER" id="PTHR11946:SF93">
    <property type="entry name" value="VALINE--TRNA LIGASE, CHLOROPLASTIC_MITOCHONDRIAL 2"/>
    <property type="match status" value="1"/>
</dbReference>
<dbReference type="PANTHER" id="PTHR11946">
    <property type="entry name" value="VALYL-TRNA SYNTHETASES"/>
    <property type="match status" value="1"/>
</dbReference>
<dbReference type="Pfam" id="PF08264">
    <property type="entry name" value="Anticodon_1"/>
    <property type="match status" value="1"/>
</dbReference>
<dbReference type="Pfam" id="PF00133">
    <property type="entry name" value="tRNA-synt_1"/>
    <property type="match status" value="1"/>
</dbReference>
<dbReference type="Pfam" id="PF10458">
    <property type="entry name" value="Val_tRNA-synt_C"/>
    <property type="match status" value="1"/>
</dbReference>
<dbReference type="PRINTS" id="PR00986">
    <property type="entry name" value="TRNASYNTHVAL"/>
</dbReference>
<dbReference type="SUPFAM" id="SSF47323">
    <property type="entry name" value="Anticodon-binding domain of a subclass of class I aminoacyl-tRNA synthetases"/>
    <property type="match status" value="1"/>
</dbReference>
<dbReference type="SUPFAM" id="SSF52374">
    <property type="entry name" value="Nucleotidylyl transferase"/>
    <property type="match status" value="1"/>
</dbReference>
<dbReference type="SUPFAM" id="SSF46589">
    <property type="entry name" value="tRNA-binding arm"/>
    <property type="match status" value="1"/>
</dbReference>
<dbReference type="SUPFAM" id="SSF50677">
    <property type="entry name" value="ValRS/IleRS/LeuRS editing domain"/>
    <property type="match status" value="1"/>
</dbReference>
<dbReference type="PROSITE" id="PS00178">
    <property type="entry name" value="AA_TRNA_LIGASE_I"/>
    <property type="match status" value="1"/>
</dbReference>
<accession>Q7UXH9</accession>
<comment type="function">
    <text evidence="1">Catalyzes the attachment of valine to tRNA(Val). As ValRS can inadvertently accommodate and process structurally similar amino acids such as threonine, to avoid such errors, it has a 'posttransfer' editing activity that hydrolyzes mischarged Thr-tRNA(Val) in a tRNA-dependent manner.</text>
</comment>
<comment type="catalytic activity">
    <reaction evidence="1">
        <text>tRNA(Val) + L-valine + ATP = L-valyl-tRNA(Val) + AMP + diphosphate</text>
        <dbReference type="Rhea" id="RHEA:10704"/>
        <dbReference type="Rhea" id="RHEA-COMP:9672"/>
        <dbReference type="Rhea" id="RHEA-COMP:9708"/>
        <dbReference type="ChEBI" id="CHEBI:30616"/>
        <dbReference type="ChEBI" id="CHEBI:33019"/>
        <dbReference type="ChEBI" id="CHEBI:57762"/>
        <dbReference type="ChEBI" id="CHEBI:78442"/>
        <dbReference type="ChEBI" id="CHEBI:78537"/>
        <dbReference type="ChEBI" id="CHEBI:456215"/>
        <dbReference type="EC" id="6.1.1.9"/>
    </reaction>
</comment>
<comment type="subunit">
    <text evidence="1">Monomer.</text>
</comment>
<comment type="subcellular location">
    <subcellularLocation>
        <location evidence="1">Cytoplasm</location>
    </subcellularLocation>
</comment>
<comment type="domain">
    <text evidence="1">ValRS has two distinct active sites: one for aminoacylation and one for editing. The misactivated threonine is translocated from the active site to the editing site.</text>
</comment>
<comment type="domain">
    <text evidence="1">The C-terminal coiled-coil domain is crucial for aminoacylation activity.</text>
</comment>
<comment type="similarity">
    <text evidence="1">Belongs to the class-I aminoacyl-tRNA synthetase family. ValS type 1 subfamily.</text>
</comment>
<comment type="sequence caution" evidence="2">
    <conflict type="erroneous initiation">
        <sequence resource="EMBL-CDS" id="CAD72027"/>
    </conflict>
</comment>
<feature type="chain" id="PRO_0000224547" description="Valine--tRNA ligase">
    <location>
        <begin position="1"/>
        <end position="1035"/>
    </location>
</feature>
<feature type="coiled-coil region" evidence="1">
    <location>
        <begin position="253"/>
        <end position="281"/>
    </location>
</feature>
<feature type="coiled-coil region" evidence="1">
    <location>
        <begin position="967"/>
        <end position="1035"/>
    </location>
</feature>
<feature type="short sequence motif" description="'HIGH' region">
    <location>
        <begin position="45"/>
        <end position="55"/>
    </location>
</feature>
<feature type="binding site" evidence="1">
    <location>
        <position position="619"/>
    </location>
    <ligand>
        <name>ATP</name>
        <dbReference type="ChEBI" id="CHEBI:30616"/>
    </ligand>
</feature>
<sequence>MSEIPTRFEHAEEADKIAQAWTDAKCSHADPESSKPPFSVVIPPPNVTGALHLGHGLNNTLQDIVVRRKRMQGFETLWMPGTDHAGIATQAVVERRLKEQEDKTRHDLGREALVDRIWQWKDQYEERIIGQLKRMGTSCDWERLRFTLDPICAAAVRATFFDLFGKRRIYRGKRLVNWDTFLQTAVSDDEVFNETKKGHFYHFRYPVIDPKPGEPEFVTIATTRPETMLGDTAVAVHPDPAAALDAVEAGLREKLSDANEKEAVDLNKQIEALQKRREERLPELIQLRDMAADGRKLMLPLVDREIDLVADEWAKPEMGSGCVKITPAHDPNDYEVGIRQDLPMINILNSDGTLNGEGGQFAGLTIPKARKAVVAALEELGLMGDIEDREIELPHSDRSKTPIEPYLADQWFVAMDELAQSAMDAVSDERVQIFPARYRKGYLDWLSEKRDWPVSRQLWWGHRIPIWSVGGLSQQEANELSSELEKLAERHPDQIAQRIDSDGVDAAGEPTKAVFVCIRSEDETVEADVEALGLQQDPDVLDTWFSSALWPHSTLGWPAQTPELAKFYPTATLITSRDILTLWVARMVLMGLNNVGEVPFSEVFIHPKILDGLGETMSKSKGNGVDPIDVIDKFGPDALRFGLARLATETQDVRMPVQYECPSCEKLIDQTKKNRALPSMDCPACGKPFSTQWAETEADKSLPKAAVVSERFETARNFVNKLWNASRFVMMNLDGFEPTSLDVASLPIEDRWLLSRLSTVTQTVGDAIERYQFGEAARVLYDFAWDEFCSFYVEIAKPRLSDDSQRQIAQNVIAHGLDQLLRLLHPIMPFVTESVWNHLGQIAPKRGVPEPAEVGPFVMTASFPVADESHHDSKIERQFSEFQQIVAAIRQIRASQNIAPKETVPAAIRCSASSQELLQPMTAYFEALAGAEVQSLGPDTTAFETDAHLALPDVDVDVHVDLEKFIDVEAELARLEKLQGQLTGQITGKQNKLSNESFVSRAPADIVQKERESLAGLQTQLEAVAQDILKLQSKK</sequence>
<protein>
    <recommendedName>
        <fullName evidence="1">Valine--tRNA ligase</fullName>
        <ecNumber evidence="1">6.1.1.9</ecNumber>
    </recommendedName>
    <alternativeName>
        <fullName evidence="1">Valyl-tRNA synthetase</fullName>
        <shortName evidence="1">ValRS</shortName>
    </alternativeName>
</protein>
<evidence type="ECO:0000255" key="1">
    <source>
        <dbReference type="HAMAP-Rule" id="MF_02004"/>
    </source>
</evidence>
<evidence type="ECO:0000305" key="2"/>